<proteinExistence type="evidence at protein level"/>
<name>GGGPS_AERPE</name>
<accession>Q9YEF5</accession>
<comment type="function">
    <text evidence="1 2">Prenyltransferase that catalyzes the transfer of the geranylgeranyl moiety of geranylgeranyl diphosphate (GGPP) to the C3 hydroxyl of sn-glycerol-1-phosphate (G1P). This reaction is the first ether-bond-formation step in the biosynthesis of archaeal membrane lipids.</text>
</comment>
<comment type="catalytic activity">
    <reaction evidence="1 2">
        <text>sn-glycerol 1-phosphate + (2E,6E,10E)-geranylgeranyl diphosphate = sn-3-O-(geranylgeranyl)glycerol 1-phosphate + diphosphate</text>
        <dbReference type="Rhea" id="RHEA:23404"/>
        <dbReference type="ChEBI" id="CHEBI:33019"/>
        <dbReference type="ChEBI" id="CHEBI:57677"/>
        <dbReference type="ChEBI" id="CHEBI:57685"/>
        <dbReference type="ChEBI" id="CHEBI:58756"/>
        <dbReference type="EC" id="2.5.1.41"/>
    </reaction>
</comment>
<comment type="cofactor">
    <cofactor evidence="1">
        <name>Mg(2+)</name>
        <dbReference type="ChEBI" id="CHEBI:18420"/>
    </cofactor>
</comment>
<comment type="pathway">
    <text evidence="1">Membrane lipid metabolism; glycerophospholipid metabolism.</text>
</comment>
<comment type="subunit">
    <text evidence="2">Homohexamer.</text>
</comment>
<comment type="subcellular location">
    <subcellularLocation>
        <location evidence="1">Cytoplasm</location>
    </subcellularLocation>
</comment>
<comment type="similarity">
    <text evidence="1">Belongs to the GGGP/HepGP synthase family. Group II subfamily.</text>
</comment>
<gene>
    <name type="ordered locus">APE_0621.1</name>
</gene>
<organism>
    <name type="scientific">Aeropyrum pernix (strain ATCC 700893 / DSM 11879 / JCM 9820 / NBRC 100138 / K1)</name>
    <dbReference type="NCBI Taxonomy" id="272557"/>
    <lineage>
        <taxon>Archaea</taxon>
        <taxon>Thermoproteota</taxon>
        <taxon>Thermoprotei</taxon>
        <taxon>Desulfurococcales</taxon>
        <taxon>Desulfurococcaceae</taxon>
        <taxon>Aeropyrum</taxon>
    </lineage>
</organism>
<evidence type="ECO:0000255" key="1">
    <source>
        <dbReference type="HAMAP-Rule" id="MF_00112"/>
    </source>
</evidence>
<evidence type="ECO:0000269" key="2">
    <source>
    </source>
</evidence>
<keyword id="KW-0963">Cytoplasm</keyword>
<keyword id="KW-0444">Lipid biosynthesis</keyword>
<keyword id="KW-0443">Lipid metabolism</keyword>
<keyword id="KW-0460">Magnesium</keyword>
<keyword id="KW-0479">Metal-binding</keyword>
<keyword id="KW-0594">Phospholipid biosynthesis</keyword>
<keyword id="KW-1208">Phospholipid metabolism</keyword>
<keyword id="KW-1185">Reference proteome</keyword>
<keyword id="KW-0808">Transferase</keyword>
<protein>
    <recommendedName>
        <fullName evidence="1">Geranylgeranylglyceryl phosphate synthase</fullName>
        <shortName evidence="1">GGGP synthase</shortName>
        <shortName evidence="1">GGGPS</shortName>
        <ecNumber evidence="1 2">2.5.1.41</ecNumber>
    </recommendedName>
    <alternativeName>
        <fullName evidence="1">(S)-3-O-geranylgeranylglyceryl phosphate synthase</fullName>
    </alternativeName>
    <alternativeName>
        <fullName evidence="1">Phosphoglycerol geranylgeranyltransferase</fullName>
    </alternativeName>
</protein>
<sequence>MAVKRRRLLEKLLERRSRGRLHFTLIDPDKTGPGEAGEIAARAAEAGSDAILVGGSIGVTFEETDGVVKAAKRSGLPVILFPGGHTNASRHADAVLFLTVMNSDNPYYIVQAQILGAPLALKLGLEAIPTSYIIVGYGGAAGFVARARPIPYEKPELAALHALAGAMMGGRIIYLEAGSGAPKPVPPEAVAASRKLVDAAGYGGEVLLTVGGGVRTPEAARMLAEAGADVLVTGTLAEESPGKLADVVEAFKSA</sequence>
<feature type="chain" id="PRO_0000138727" description="Geranylgeranylglyceryl phosphate synthase">
    <location>
        <begin position="1"/>
        <end position="254"/>
    </location>
</feature>
<feature type="binding site" evidence="1">
    <location>
        <position position="27"/>
    </location>
    <ligand>
        <name>Mg(2+)</name>
        <dbReference type="ChEBI" id="CHEBI:18420"/>
    </ligand>
</feature>
<feature type="binding site" evidence="1">
    <location>
        <position position="56"/>
    </location>
    <ligand>
        <name>Mg(2+)</name>
        <dbReference type="ChEBI" id="CHEBI:18420"/>
    </ligand>
</feature>
<feature type="binding site" evidence="1">
    <location>
        <begin position="174"/>
        <end position="180"/>
    </location>
    <ligand>
        <name>sn-glycerol 1-phosphate</name>
        <dbReference type="ChEBI" id="CHEBI:57685"/>
    </ligand>
</feature>
<feature type="binding site" evidence="1">
    <location>
        <begin position="212"/>
        <end position="213"/>
    </location>
    <ligand>
        <name>sn-glycerol 1-phosphate</name>
        <dbReference type="ChEBI" id="CHEBI:57685"/>
    </ligand>
</feature>
<feature type="binding site" evidence="1">
    <location>
        <begin position="234"/>
        <end position="235"/>
    </location>
    <ligand>
        <name>sn-glycerol 1-phosphate</name>
        <dbReference type="ChEBI" id="CHEBI:57685"/>
    </ligand>
</feature>
<dbReference type="EC" id="2.5.1.41" evidence="1 2"/>
<dbReference type="EMBL" id="BA000002">
    <property type="protein sequence ID" value="BAA79591.2"/>
    <property type="molecule type" value="Genomic_DNA"/>
</dbReference>
<dbReference type="PIR" id="G72648">
    <property type="entry name" value="G72648"/>
</dbReference>
<dbReference type="RefSeq" id="WP_010865869.1">
    <property type="nucleotide sequence ID" value="NC_000854.2"/>
</dbReference>
<dbReference type="SMR" id="Q9YEF5"/>
<dbReference type="STRING" id="272557.APE_0621.1"/>
<dbReference type="EnsemblBacteria" id="BAA79591">
    <property type="protein sequence ID" value="BAA79591"/>
    <property type="gene ID" value="APE_0621.1"/>
</dbReference>
<dbReference type="GeneID" id="1444771"/>
<dbReference type="KEGG" id="ape:APE_0621.1"/>
<dbReference type="PATRIC" id="fig|272557.25.peg.456"/>
<dbReference type="eggNOG" id="arCOG01085">
    <property type="taxonomic scope" value="Archaea"/>
</dbReference>
<dbReference type="BioCyc" id="MetaCyc:MONOMER-22055"/>
<dbReference type="UniPathway" id="UPA00940"/>
<dbReference type="Proteomes" id="UP000002518">
    <property type="component" value="Chromosome"/>
</dbReference>
<dbReference type="GO" id="GO:0005737">
    <property type="term" value="C:cytoplasm"/>
    <property type="evidence" value="ECO:0007669"/>
    <property type="project" value="UniProtKB-SubCell"/>
</dbReference>
<dbReference type="GO" id="GO:0000287">
    <property type="term" value="F:magnesium ion binding"/>
    <property type="evidence" value="ECO:0007669"/>
    <property type="project" value="UniProtKB-UniRule"/>
</dbReference>
<dbReference type="GO" id="GO:0047294">
    <property type="term" value="F:phosphoglycerol geranylgeranyltransferase activity"/>
    <property type="evidence" value="ECO:0007669"/>
    <property type="project" value="UniProtKB-UniRule"/>
</dbReference>
<dbReference type="GO" id="GO:0046474">
    <property type="term" value="P:glycerophospholipid biosynthetic process"/>
    <property type="evidence" value="ECO:0007669"/>
    <property type="project" value="UniProtKB-UniRule"/>
</dbReference>
<dbReference type="CDD" id="cd02812">
    <property type="entry name" value="PcrB_like"/>
    <property type="match status" value="1"/>
</dbReference>
<dbReference type="Gene3D" id="3.20.20.390">
    <property type="entry name" value="FMN-linked oxidoreductases"/>
    <property type="match status" value="1"/>
</dbReference>
<dbReference type="HAMAP" id="MF_00112">
    <property type="entry name" value="GGGP_HepGP_synthase"/>
    <property type="match status" value="1"/>
</dbReference>
<dbReference type="InterPro" id="IPR039074">
    <property type="entry name" value="GGGP/HepGP_synthase_I"/>
</dbReference>
<dbReference type="InterPro" id="IPR038597">
    <property type="entry name" value="GGGP/HepGP_synthase_sf"/>
</dbReference>
<dbReference type="InterPro" id="IPR008205">
    <property type="entry name" value="GGGP_HepGP_synthase"/>
</dbReference>
<dbReference type="InterPro" id="IPR010946">
    <property type="entry name" value="GGGP_synth"/>
</dbReference>
<dbReference type="NCBIfam" id="TIGR01769">
    <property type="entry name" value="GGGP"/>
    <property type="match status" value="1"/>
</dbReference>
<dbReference type="NCBIfam" id="TIGR01768">
    <property type="entry name" value="GGGP-family"/>
    <property type="match status" value="1"/>
</dbReference>
<dbReference type="NCBIfam" id="NF003198">
    <property type="entry name" value="PRK04169.1-2"/>
    <property type="match status" value="1"/>
</dbReference>
<dbReference type="PANTHER" id="PTHR40029">
    <property type="match status" value="1"/>
</dbReference>
<dbReference type="PANTHER" id="PTHR40029:SF2">
    <property type="entry name" value="HEPTAPRENYLGLYCERYL PHOSPHATE SYNTHASE"/>
    <property type="match status" value="1"/>
</dbReference>
<dbReference type="Pfam" id="PF01884">
    <property type="entry name" value="PcrB"/>
    <property type="match status" value="1"/>
</dbReference>
<dbReference type="SUPFAM" id="SSF51395">
    <property type="entry name" value="FMN-linked oxidoreductases"/>
    <property type="match status" value="1"/>
</dbReference>
<reference key="1">
    <citation type="journal article" date="1999" name="DNA Res.">
        <title>Complete genome sequence of an aerobic hyper-thermophilic crenarchaeon, Aeropyrum pernix K1.</title>
        <authorList>
            <person name="Kawarabayasi Y."/>
            <person name="Hino Y."/>
            <person name="Horikawa H."/>
            <person name="Yamazaki S."/>
            <person name="Haikawa Y."/>
            <person name="Jin-no K."/>
            <person name="Takahashi M."/>
            <person name="Sekine M."/>
            <person name="Baba S."/>
            <person name="Ankai A."/>
            <person name="Kosugi H."/>
            <person name="Hosoyama A."/>
            <person name="Fukui S."/>
            <person name="Nagai Y."/>
            <person name="Nishijima K."/>
            <person name="Nakazawa H."/>
            <person name="Takamiya M."/>
            <person name="Masuda S."/>
            <person name="Funahashi T."/>
            <person name="Tanaka T."/>
            <person name="Kudoh Y."/>
            <person name="Yamazaki J."/>
            <person name="Kushida N."/>
            <person name="Oguchi A."/>
            <person name="Aoki K."/>
            <person name="Kubota K."/>
            <person name="Nakamura Y."/>
            <person name="Nomura N."/>
            <person name="Sako Y."/>
            <person name="Kikuchi H."/>
        </authorList>
    </citation>
    <scope>NUCLEOTIDE SEQUENCE [LARGE SCALE GENOMIC DNA]</scope>
    <source>
        <strain>ATCC 700893 / DSM 11879 / JCM 9820 / NBRC 100138 / K1</strain>
    </source>
</reference>
<reference key="2">
    <citation type="journal article" date="2014" name="Mol. Microbiol.">
        <title>A comprehensive analysis of the geranylgeranylglyceryl phosphate synthase enzyme family identifies novel members and reveals mechanisms of substrate specificity and quaternary structure organization.</title>
        <authorList>
            <person name="Peterhoff D."/>
            <person name="Beer B."/>
            <person name="Rajendran C."/>
            <person name="Kumpula E.P."/>
            <person name="Kapetaniou E."/>
            <person name="Guldan H."/>
            <person name="Wierenga R.K."/>
            <person name="Sterner R."/>
            <person name="Babinger P."/>
        </authorList>
    </citation>
    <scope>FUNCTION</scope>
    <scope>CATALYTIC ACTIVITY</scope>
    <scope>SUBUNIT</scope>
</reference>